<keyword id="KW-0472">Membrane</keyword>
<keyword id="KW-0496">Mitochondrion</keyword>
<keyword id="KW-1000">Mitochondrion outer membrane</keyword>
<keyword id="KW-0653">Protein transport</keyword>
<keyword id="KW-1185">Reference proteome</keyword>
<keyword id="KW-0812">Transmembrane</keyword>
<keyword id="KW-1134">Transmembrane beta strand</keyword>
<keyword id="KW-0813">Transport</keyword>
<comment type="function">
    <text evidence="1">Channel-forming protein essential for import of protein precursors into mitochondria. Plays a role in the assembly of the mitochondrial membrane respiratory chain NADH dehydrogenase (Complex I) by forming a complex with BCAP31 and mediating the translocation of Complex I components from the cytosol to the mitochondria.</text>
</comment>
<comment type="subunit">
    <text evidence="1 2">Forms part of the preprotein translocase complex of the outer mitochondrial membrane (TOM complex) which consists of at least 7 different proteins (TOMM5, TOMM6, TOMM7, TOMM20, TOMM22, TOMM40 and TOMM70). Interacts with mitochondrial targeting sequences. Interacts with TIMM29; linking the TIM22 complex to the TOM complex. Forms a complex with BCAP31 (via C-terminus) which mediates the translocation of components of the mitochondrial membrane respiratory chain NADH dehydrogenase (Complex I) from the cytosol to the mitochondria (By similarity). Interacts (via N-terminus) with CYP1A1 (via mitochondrial targeting signal); this interaction is required for CYP1A1 translocation across the mitochondrial outer membrane (By similarity).</text>
</comment>
<comment type="subcellular location">
    <subcellularLocation>
        <location evidence="1">Mitochondrion outer membrane</location>
        <topology evidence="3">Multi-pass membrane protein</topology>
    </subcellularLocation>
    <text evidence="1">Associates with the mitochondria-associated ER membrane via interaction with BCAP31.</text>
</comment>
<comment type="similarity">
    <text evidence="3">Belongs to the Tom40 family.</text>
</comment>
<sequence>MGNVLAASSPPAGPPPPPAPPLVGLPPPPPSPPGFTLPPLGGGLGAGAGTGRGSERTPGTAAASAGGTADDGACGCLPNPGTFEECHRKCKELFPIQMEGVKLTVNKGLSNHFQVNHTVALSTIGESNYHFGVTYVGTKQLSPTEAFPVLVGDMDNSGSLNAQVIHQLGPGLRSKMAIQTQQSKFVNWQVDGEYRGSDFTAAVTLGNPDVLVGSGILVAHYLQSITPCLALGGELVYHRRPGEEGAVMSLAGKYTLNNWLATVTLGQAGMHATYYHKASDQLQVGVEFEASTRMQDTSVSFGYQLDLPKANLLFKGSVDSNWIVGATLEKKLPPLPLTLALGAFLNHRKNKFQCGFGLTIG</sequence>
<protein>
    <recommendedName>
        <fullName>Mitochondrial import receptor subunit TOM40 homolog</fullName>
    </recommendedName>
    <alternativeName>
        <fullName>Translocase of outer membrane 40 kDa subunit homolog</fullName>
    </alternativeName>
</protein>
<proteinExistence type="evidence at transcript level"/>
<organism>
    <name type="scientific">Bos taurus</name>
    <name type="common">Bovine</name>
    <dbReference type="NCBI Taxonomy" id="9913"/>
    <lineage>
        <taxon>Eukaryota</taxon>
        <taxon>Metazoa</taxon>
        <taxon>Chordata</taxon>
        <taxon>Craniata</taxon>
        <taxon>Vertebrata</taxon>
        <taxon>Euteleostomi</taxon>
        <taxon>Mammalia</taxon>
        <taxon>Eutheria</taxon>
        <taxon>Laurasiatheria</taxon>
        <taxon>Artiodactyla</taxon>
        <taxon>Ruminantia</taxon>
        <taxon>Pecora</taxon>
        <taxon>Bovidae</taxon>
        <taxon>Bovinae</taxon>
        <taxon>Bos</taxon>
    </lineage>
</organism>
<name>TOM40_BOVIN</name>
<feature type="chain" id="PRO_0000312685" description="Mitochondrial import receptor subunit TOM40 homolog">
    <location>
        <begin position="1"/>
        <end position="361"/>
    </location>
</feature>
<feature type="region of interest" description="Disordered" evidence="4">
    <location>
        <begin position="1"/>
        <end position="71"/>
    </location>
</feature>
<feature type="compositionally biased region" description="Low complexity" evidence="4">
    <location>
        <begin position="1"/>
        <end position="10"/>
    </location>
</feature>
<feature type="compositionally biased region" description="Pro residues" evidence="4">
    <location>
        <begin position="11"/>
        <end position="36"/>
    </location>
</feature>
<feature type="compositionally biased region" description="Gly residues" evidence="4">
    <location>
        <begin position="40"/>
        <end position="52"/>
    </location>
</feature>
<feature type="compositionally biased region" description="Low complexity" evidence="4">
    <location>
        <begin position="59"/>
        <end position="71"/>
    </location>
</feature>
<gene>
    <name evidence="5" type="primary">TOMM40</name>
</gene>
<dbReference type="EMBL" id="BC116105">
    <property type="protein sequence ID" value="AAI16106.1"/>
    <property type="molecule type" value="mRNA"/>
</dbReference>
<dbReference type="RefSeq" id="NP_001068906.1">
    <property type="nucleotide sequence ID" value="NM_001075438.1"/>
</dbReference>
<dbReference type="RefSeq" id="XP_024833882.1">
    <property type="nucleotide sequence ID" value="XM_024978114.2"/>
</dbReference>
<dbReference type="SMR" id="Q1LZB5"/>
<dbReference type="FunCoup" id="Q1LZB5">
    <property type="interactions" value="3064"/>
</dbReference>
<dbReference type="STRING" id="9913.ENSBTAP00000032188"/>
<dbReference type="PaxDb" id="9913-ENSBTAP00000032188"/>
<dbReference type="Ensembl" id="ENSBTAT00000032251.6">
    <property type="protein sequence ID" value="ENSBTAP00000032188.4"/>
    <property type="gene ID" value="ENSBTAG00000001781.7"/>
</dbReference>
<dbReference type="GeneID" id="510219"/>
<dbReference type="KEGG" id="bta:510219"/>
<dbReference type="CTD" id="10452"/>
<dbReference type="VEuPathDB" id="HostDB:ENSBTAG00000001781"/>
<dbReference type="VGNC" id="VGNC:49148">
    <property type="gene designation" value="TOMM40"/>
</dbReference>
<dbReference type="eggNOG" id="KOG3296">
    <property type="taxonomic scope" value="Eukaryota"/>
</dbReference>
<dbReference type="GeneTree" id="ENSGT00390000003308"/>
<dbReference type="HOGENOM" id="CLU_054399_0_0_1"/>
<dbReference type="InParanoid" id="Q1LZB5"/>
<dbReference type="OMA" id="TRFNYRW"/>
<dbReference type="OrthoDB" id="19656at2759"/>
<dbReference type="TreeFam" id="TF106204"/>
<dbReference type="Reactome" id="R-BTA-5205685">
    <property type="pathway name" value="PINK1-PRKN Mediated Mitophagy"/>
</dbReference>
<dbReference type="Proteomes" id="UP000009136">
    <property type="component" value="Chromosome 18"/>
</dbReference>
<dbReference type="Bgee" id="ENSBTAG00000001781">
    <property type="expression patterns" value="Expressed in retina and 105 other cell types or tissues"/>
</dbReference>
<dbReference type="GO" id="GO:0005829">
    <property type="term" value="C:cytosol"/>
    <property type="evidence" value="ECO:0007669"/>
    <property type="project" value="Ensembl"/>
</dbReference>
<dbReference type="GO" id="GO:0044233">
    <property type="term" value="C:mitochondria-associated endoplasmic reticulum membrane contact site"/>
    <property type="evidence" value="ECO:0007669"/>
    <property type="project" value="Ensembl"/>
</dbReference>
<dbReference type="GO" id="GO:0005743">
    <property type="term" value="C:mitochondrial inner membrane"/>
    <property type="evidence" value="ECO:0007669"/>
    <property type="project" value="Ensembl"/>
</dbReference>
<dbReference type="GO" id="GO:0005742">
    <property type="term" value="C:mitochondrial outer membrane translocase complex"/>
    <property type="evidence" value="ECO:0000318"/>
    <property type="project" value="GO_Central"/>
</dbReference>
<dbReference type="GO" id="GO:0008320">
    <property type="term" value="F:protein transmembrane transporter activity"/>
    <property type="evidence" value="ECO:0000318"/>
    <property type="project" value="GO_Central"/>
</dbReference>
<dbReference type="GO" id="GO:0030150">
    <property type="term" value="P:protein import into mitochondrial matrix"/>
    <property type="evidence" value="ECO:0000318"/>
    <property type="project" value="GO_Central"/>
</dbReference>
<dbReference type="GO" id="GO:0006626">
    <property type="term" value="P:protein targeting to mitochondrion"/>
    <property type="evidence" value="ECO:0000250"/>
    <property type="project" value="UniProtKB"/>
</dbReference>
<dbReference type="CDD" id="cd07305">
    <property type="entry name" value="Porin3_Tom40"/>
    <property type="match status" value="1"/>
</dbReference>
<dbReference type="FunFam" id="2.40.160.10:FF:000005">
    <property type="entry name" value="mitochondrial import receptor subunit TOM40 homolog"/>
    <property type="match status" value="1"/>
</dbReference>
<dbReference type="Gene3D" id="2.40.160.10">
    <property type="entry name" value="Porin"/>
    <property type="match status" value="1"/>
</dbReference>
<dbReference type="InterPro" id="IPR023614">
    <property type="entry name" value="Porin_dom_sf"/>
</dbReference>
<dbReference type="InterPro" id="IPR027246">
    <property type="entry name" value="Porin_Euk/Tom40"/>
</dbReference>
<dbReference type="InterPro" id="IPR037930">
    <property type="entry name" value="Tom40"/>
</dbReference>
<dbReference type="PANTHER" id="PTHR10802">
    <property type="entry name" value="MITOCHONDRIAL IMPORT RECEPTOR SUBUNIT TOM40"/>
    <property type="match status" value="1"/>
</dbReference>
<dbReference type="Pfam" id="PF01459">
    <property type="entry name" value="Porin_3"/>
    <property type="match status" value="1"/>
</dbReference>
<reference evidence="5" key="1">
    <citation type="submission" date="2006-05" db="EMBL/GenBank/DDBJ databases">
        <authorList>
            <consortium name="NIH - Mammalian Gene Collection (MGC) project"/>
        </authorList>
    </citation>
    <scope>NUCLEOTIDE SEQUENCE [LARGE SCALE MRNA]</scope>
    <source>
        <strain evidence="5">Hereford</strain>
        <tissue evidence="5">Ascending colon</tissue>
    </source>
</reference>
<evidence type="ECO:0000250" key="1">
    <source>
        <dbReference type="UniProtKB" id="O96008"/>
    </source>
</evidence>
<evidence type="ECO:0000250" key="2">
    <source>
        <dbReference type="UniProtKB" id="Q75Q40"/>
    </source>
</evidence>
<evidence type="ECO:0000255" key="3"/>
<evidence type="ECO:0000256" key="4">
    <source>
        <dbReference type="SAM" id="MobiDB-lite"/>
    </source>
</evidence>
<evidence type="ECO:0000312" key="5">
    <source>
        <dbReference type="EMBL" id="AAI16106.1"/>
    </source>
</evidence>
<accession>Q1LZB5</accession>